<organism>
    <name type="scientific">Rattus norvegicus</name>
    <name type="common">Rat</name>
    <dbReference type="NCBI Taxonomy" id="10116"/>
    <lineage>
        <taxon>Eukaryota</taxon>
        <taxon>Metazoa</taxon>
        <taxon>Chordata</taxon>
        <taxon>Craniata</taxon>
        <taxon>Vertebrata</taxon>
        <taxon>Euteleostomi</taxon>
        <taxon>Mammalia</taxon>
        <taxon>Eutheria</taxon>
        <taxon>Euarchontoglires</taxon>
        <taxon>Glires</taxon>
        <taxon>Rodentia</taxon>
        <taxon>Myomorpha</taxon>
        <taxon>Muroidea</taxon>
        <taxon>Muridae</taxon>
        <taxon>Murinae</taxon>
        <taxon>Rattus</taxon>
    </lineage>
</organism>
<keyword id="KW-0007">Acetylation</keyword>
<keyword id="KW-0963">Cytoplasm</keyword>
<keyword id="KW-0206">Cytoskeleton</keyword>
<keyword id="KW-0378">Hydrolase</keyword>
<keyword id="KW-0539">Nucleus</keyword>
<keyword id="KW-0597">Phosphoprotein</keyword>
<keyword id="KW-0904">Protein phosphatase</keyword>
<keyword id="KW-1185">Reference proteome</keyword>
<proteinExistence type="evidence at protein level"/>
<sequence>MALVTVSRSPPASGHSTPVGPTDRVIRRRGRLQRRQSFAVLRGAVLGLQDGGEGNDAAEADPEPMEKPSGEEQPAEDQTDNGQGSQSPWKQVQKRHLHLMVELLRPQDDIRLAAQLEAARPPRLRYLLVVSTGEGLSEEETILLGVDFPDSSSHSCTLGLVLPLWSDTQVYLDGDGGFSVTSGGQSRIFKPVSIQTMWATLQVLHQACEVALGSGLVPGGSALAWATHYQEKLNSDQGCLNEWMAMSDLESFRPPNAEPGQASEQEQMEQAILAELWQVLDASDLDSVTSKEIRQALELRLGCPLQQYRDFIDNQMLLLMAQQDRASRIFPHLYLGSEWNAANLEELQRNRVSHILNMAREIDNFFPERFTYHNVRVWDEESAQLLPHWKETHRFIEDARAQGTRVLVHCKMGVSRSAATVLAYAMKQYGWGLEQALIHVQELRPIVRPNPGFLRQLQTYQGILTASRQSHVWEQKVGVVSPEEPLAPEVSTPLPPLPPEPGGSGEGMVMGQKGSQETPKEELGLRPRINLRGVMRSISLLEPSSEPESTTEAGDLPEVFSSDEEPLHPFSQLSRAKGGQRVCKGPWPALKSRQSVVALHSAALVASRARAFQGQGQGQGQEQRETGTSSTPRLRKVIRQASVDDSREEGKA</sequence>
<evidence type="ECO:0000250" key="1"/>
<evidence type="ECO:0000250" key="2">
    <source>
        <dbReference type="UniProtKB" id="Q8K330"/>
    </source>
</evidence>
<evidence type="ECO:0000250" key="3">
    <source>
        <dbReference type="UniProtKB" id="Q8TE77"/>
    </source>
</evidence>
<evidence type="ECO:0000255" key="4">
    <source>
        <dbReference type="PROSITE-ProRule" id="PRU00160"/>
    </source>
</evidence>
<evidence type="ECO:0000255" key="5">
    <source>
        <dbReference type="PROSITE-ProRule" id="PRU01342"/>
    </source>
</evidence>
<evidence type="ECO:0000255" key="6">
    <source>
        <dbReference type="PROSITE-ProRule" id="PRU10044"/>
    </source>
</evidence>
<evidence type="ECO:0000256" key="7">
    <source>
        <dbReference type="SAM" id="MobiDB-lite"/>
    </source>
</evidence>
<evidence type="ECO:0000305" key="8"/>
<dbReference type="EC" id="3.1.3.16"/>
<dbReference type="EC" id="3.1.3.48"/>
<dbReference type="EMBL" id="BC083600">
    <property type="protein sequence ID" value="AAH83600.1"/>
    <property type="molecule type" value="mRNA"/>
</dbReference>
<dbReference type="RefSeq" id="NP_001012217.1">
    <property type="nucleotide sequence ID" value="NM_001012217.1"/>
</dbReference>
<dbReference type="SMR" id="Q5XIS1"/>
<dbReference type="FunCoup" id="Q5XIS1">
    <property type="interactions" value="1836"/>
</dbReference>
<dbReference type="STRING" id="10116.ENSRNOP00000025546"/>
<dbReference type="GlyGen" id="Q5XIS1">
    <property type="glycosylation" value="1 site"/>
</dbReference>
<dbReference type="iPTMnet" id="Q5XIS1"/>
<dbReference type="PhosphoSitePlus" id="Q5XIS1"/>
<dbReference type="PaxDb" id="10116-ENSRNOP00000025546"/>
<dbReference type="GeneID" id="365396"/>
<dbReference type="KEGG" id="rno:365396"/>
<dbReference type="AGR" id="RGD:1308679"/>
<dbReference type="CTD" id="54961"/>
<dbReference type="RGD" id="1308679">
    <property type="gene designation" value="Ssh3"/>
</dbReference>
<dbReference type="eggNOG" id="KOG1716">
    <property type="taxonomic scope" value="Eukaryota"/>
</dbReference>
<dbReference type="InParanoid" id="Q5XIS1"/>
<dbReference type="PhylomeDB" id="Q5XIS1"/>
<dbReference type="PRO" id="PR:Q5XIS1"/>
<dbReference type="Proteomes" id="UP000002494">
    <property type="component" value="Unplaced"/>
</dbReference>
<dbReference type="GO" id="GO:0005737">
    <property type="term" value="C:cytoplasm"/>
    <property type="evidence" value="ECO:0000318"/>
    <property type="project" value="GO_Central"/>
</dbReference>
<dbReference type="GO" id="GO:0005856">
    <property type="term" value="C:cytoskeleton"/>
    <property type="evidence" value="ECO:0007669"/>
    <property type="project" value="UniProtKB-SubCell"/>
</dbReference>
<dbReference type="GO" id="GO:0005634">
    <property type="term" value="C:nucleus"/>
    <property type="evidence" value="ECO:0007669"/>
    <property type="project" value="UniProtKB-SubCell"/>
</dbReference>
<dbReference type="GO" id="GO:0003779">
    <property type="term" value="F:actin binding"/>
    <property type="evidence" value="ECO:0000318"/>
    <property type="project" value="GO_Central"/>
</dbReference>
<dbReference type="GO" id="GO:0004721">
    <property type="term" value="F:phosphoprotein phosphatase activity"/>
    <property type="evidence" value="ECO:0000318"/>
    <property type="project" value="GO_Central"/>
</dbReference>
<dbReference type="GO" id="GO:0004722">
    <property type="term" value="F:protein serine/threonine phosphatase activity"/>
    <property type="evidence" value="ECO:0007669"/>
    <property type="project" value="UniProtKB-EC"/>
</dbReference>
<dbReference type="GO" id="GO:0004725">
    <property type="term" value="F:protein tyrosine phosphatase activity"/>
    <property type="evidence" value="ECO:0007669"/>
    <property type="project" value="UniProtKB-EC"/>
</dbReference>
<dbReference type="GO" id="GO:0030036">
    <property type="term" value="P:actin cytoskeleton organization"/>
    <property type="evidence" value="ECO:0000318"/>
    <property type="project" value="GO_Central"/>
</dbReference>
<dbReference type="GO" id="GO:0030837">
    <property type="term" value="P:negative regulation of actin filament polymerization"/>
    <property type="evidence" value="ECO:0000318"/>
    <property type="project" value="GO_Central"/>
</dbReference>
<dbReference type="CDD" id="cd14571">
    <property type="entry name" value="DSP_slingshot_3"/>
    <property type="match status" value="1"/>
</dbReference>
<dbReference type="FunFam" id="3.90.190.10:FF:000004">
    <property type="entry name" value="Protein phosphatase Slingshot homolog 2"/>
    <property type="match status" value="1"/>
</dbReference>
<dbReference type="Gene3D" id="3.90.190.10">
    <property type="entry name" value="Protein tyrosine phosphatase superfamily"/>
    <property type="match status" value="1"/>
</dbReference>
<dbReference type="InterPro" id="IPR014876">
    <property type="entry name" value="DEK_C"/>
</dbReference>
<dbReference type="InterPro" id="IPR000340">
    <property type="entry name" value="Dual-sp_phosphatase_cat-dom"/>
</dbReference>
<dbReference type="InterPro" id="IPR043587">
    <property type="entry name" value="Phosphatase_SSH-like"/>
</dbReference>
<dbReference type="InterPro" id="IPR029021">
    <property type="entry name" value="Prot-tyrosine_phosphatase-like"/>
</dbReference>
<dbReference type="InterPro" id="IPR016130">
    <property type="entry name" value="Tyr_Pase_AS"/>
</dbReference>
<dbReference type="InterPro" id="IPR000387">
    <property type="entry name" value="Tyr_Pase_dom"/>
</dbReference>
<dbReference type="InterPro" id="IPR020422">
    <property type="entry name" value="TYR_PHOSPHATASE_DUAL_dom"/>
</dbReference>
<dbReference type="PANTHER" id="PTHR45864:SF4">
    <property type="entry name" value="PROTEIN PHOSPHATASE SLINGSHOT HOMOLOG 3"/>
    <property type="match status" value="1"/>
</dbReference>
<dbReference type="PANTHER" id="PTHR45864">
    <property type="entry name" value="SLINGSHOT PROTEIN PHOSPHATASE HOMOLOG"/>
    <property type="match status" value="1"/>
</dbReference>
<dbReference type="Pfam" id="PF08766">
    <property type="entry name" value="DEK_C"/>
    <property type="match status" value="1"/>
</dbReference>
<dbReference type="Pfam" id="PF00782">
    <property type="entry name" value="DSPc"/>
    <property type="match status" value="1"/>
</dbReference>
<dbReference type="Pfam" id="PF23040">
    <property type="entry name" value="PH_SSH1-like_1st"/>
    <property type="match status" value="1"/>
</dbReference>
<dbReference type="SMART" id="SM00195">
    <property type="entry name" value="DSPc"/>
    <property type="match status" value="1"/>
</dbReference>
<dbReference type="SUPFAM" id="SSF52799">
    <property type="entry name" value="(Phosphotyrosine protein) phosphatases II"/>
    <property type="match status" value="1"/>
</dbReference>
<dbReference type="SUPFAM" id="SSF109715">
    <property type="entry name" value="DEK C-terminal domain"/>
    <property type="match status" value="1"/>
</dbReference>
<dbReference type="PROSITE" id="PS51998">
    <property type="entry name" value="DEK_C"/>
    <property type="match status" value="1"/>
</dbReference>
<dbReference type="PROSITE" id="PS00383">
    <property type="entry name" value="TYR_PHOSPHATASE_1"/>
    <property type="match status" value="1"/>
</dbReference>
<dbReference type="PROSITE" id="PS50056">
    <property type="entry name" value="TYR_PHOSPHATASE_2"/>
    <property type="match status" value="1"/>
</dbReference>
<dbReference type="PROSITE" id="PS50054">
    <property type="entry name" value="TYR_PHOSPHATASE_DUAL"/>
    <property type="match status" value="1"/>
</dbReference>
<name>SSH3_RAT</name>
<protein>
    <recommendedName>
        <fullName>Protein phosphatase Slingshot homolog 3</fullName>
        <ecNumber>3.1.3.16</ecNumber>
        <ecNumber>3.1.3.48</ecNumber>
    </recommendedName>
    <alternativeName>
        <fullName>SSH-like protein 3</fullName>
        <shortName>SSH-3L</shortName>
    </alternativeName>
</protein>
<gene>
    <name type="primary">Ssh3</name>
</gene>
<reference key="1">
    <citation type="journal article" date="2004" name="Genome Res.">
        <title>The status, quality, and expansion of the NIH full-length cDNA project: the Mammalian Gene Collection (MGC).</title>
        <authorList>
            <consortium name="The MGC Project Team"/>
        </authorList>
    </citation>
    <scope>NUCLEOTIDE SEQUENCE [LARGE SCALE MRNA]</scope>
    <source>
        <tissue>Testis</tissue>
    </source>
</reference>
<reference key="2">
    <citation type="journal article" date="2012" name="Nat. Commun.">
        <title>Quantitative maps of protein phosphorylation sites across 14 different rat organs and tissues.</title>
        <authorList>
            <person name="Lundby A."/>
            <person name="Secher A."/>
            <person name="Lage K."/>
            <person name="Nordsborg N.B."/>
            <person name="Dmytriyev A."/>
            <person name="Lundby C."/>
            <person name="Olsen J.V."/>
        </authorList>
    </citation>
    <scope>IDENTIFICATION BY MASS SPECTROMETRY [LARGE SCALE ANALYSIS]</scope>
</reference>
<comment type="function">
    <text evidence="1">Protein phosphatase which may play a role in the regulation of actin filament dynamics. Can dephosphorylate and activate the actin binding/depolymerizing factor cofilin, which subsequently binds to actin filaments and stimulates their disassembly (By similarity).</text>
</comment>
<comment type="catalytic activity">
    <reaction evidence="6">
        <text>O-phospho-L-tyrosyl-[protein] + H2O = L-tyrosyl-[protein] + phosphate</text>
        <dbReference type="Rhea" id="RHEA:10684"/>
        <dbReference type="Rhea" id="RHEA-COMP:10136"/>
        <dbReference type="Rhea" id="RHEA-COMP:20101"/>
        <dbReference type="ChEBI" id="CHEBI:15377"/>
        <dbReference type="ChEBI" id="CHEBI:43474"/>
        <dbReference type="ChEBI" id="CHEBI:46858"/>
        <dbReference type="ChEBI" id="CHEBI:61978"/>
        <dbReference type="EC" id="3.1.3.48"/>
    </reaction>
</comment>
<comment type="catalytic activity">
    <reaction>
        <text>O-phospho-L-seryl-[protein] + H2O = L-seryl-[protein] + phosphate</text>
        <dbReference type="Rhea" id="RHEA:20629"/>
        <dbReference type="Rhea" id="RHEA-COMP:9863"/>
        <dbReference type="Rhea" id="RHEA-COMP:11604"/>
        <dbReference type="ChEBI" id="CHEBI:15377"/>
        <dbReference type="ChEBI" id="CHEBI:29999"/>
        <dbReference type="ChEBI" id="CHEBI:43474"/>
        <dbReference type="ChEBI" id="CHEBI:83421"/>
        <dbReference type="EC" id="3.1.3.16"/>
    </reaction>
</comment>
<comment type="catalytic activity">
    <reaction>
        <text>O-phospho-L-threonyl-[protein] + H2O = L-threonyl-[protein] + phosphate</text>
        <dbReference type="Rhea" id="RHEA:47004"/>
        <dbReference type="Rhea" id="RHEA-COMP:11060"/>
        <dbReference type="Rhea" id="RHEA-COMP:11605"/>
        <dbReference type="ChEBI" id="CHEBI:15377"/>
        <dbReference type="ChEBI" id="CHEBI:30013"/>
        <dbReference type="ChEBI" id="CHEBI:43474"/>
        <dbReference type="ChEBI" id="CHEBI:61977"/>
        <dbReference type="EC" id="3.1.3.16"/>
    </reaction>
</comment>
<comment type="subunit">
    <text evidence="1">Does not bind to, or colocalize with, filamentous actin.</text>
</comment>
<comment type="subcellular location">
    <subcellularLocation>
        <location evidence="1">Cytoplasm</location>
        <location evidence="1">Cytoskeleton</location>
    </subcellularLocation>
    <subcellularLocation>
        <location evidence="1">Nucleus</location>
    </subcellularLocation>
</comment>
<comment type="miscellaneous">
    <text>Tyrosine phosphatase activity has not been demonstrated for this protein to date.</text>
</comment>
<comment type="similarity">
    <text evidence="8">Belongs to the protein-tyrosine phosphatase family.</text>
</comment>
<feature type="initiator methionine" description="Removed" evidence="2">
    <location>
        <position position="1"/>
    </location>
</feature>
<feature type="chain" id="PRO_0000094847" description="Protein phosphatase Slingshot homolog 3">
    <location>
        <begin position="2"/>
        <end position="652"/>
    </location>
</feature>
<feature type="domain" description="DEK-C" evidence="5">
    <location>
        <begin position="266"/>
        <end position="321"/>
    </location>
</feature>
<feature type="domain" description="Tyrosine-protein phosphatase" evidence="4">
    <location>
        <begin position="325"/>
        <end position="466"/>
    </location>
</feature>
<feature type="region of interest" description="Disordered" evidence="7">
    <location>
        <begin position="1"/>
        <end position="31"/>
    </location>
</feature>
<feature type="region of interest" description="Disordered" evidence="7">
    <location>
        <begin position="43"/>
        <end position="91"/>
    </location>
</feature>
<feature type="region of interest" description="Disordered" evidence="7">
    <location>
        <begin position="484"/>
        <end position="526"/>
    </location>
</feature>
<feature type="region of interest" description="Disordered" evidence="7">
    <location>
        <begin position="540"/>
        <end position="580"/>
    </location>
</feature>
<feature type="region of interest" description="Disordered" evidence="7">
    <location>
        <begin position="610"/>
        <end position="652"/>
    </location>
</feature>
<feature type="compositionally biased region" description="Polar residues" evidence="7">
    <location>
        <begin position="1"/>
        <end position="16"/>
    </location>
</feature>
<feature type="compositionally biased region" description="Polar residues" evidence="7">
    <location>
        <begin position="80"/>
        <end position="90"/>
    </location>
</feature>
<feature type="compositionally biased region" description="Low complexity" evidence="7">
    <location>
        <begin position="540"/>
        <end position="552"/>
    </location>
</feature>
<feature type="compositionally biased region" description="Basic and acidic residues" evidence="7">
    <location>
        <begin position="642"/>
        <end position="652"/>
    </location>
</feature>
<feature type="active site" description="Phosphocysteine intermediate" evidence="4">
    <location>
        <position position="410"/>
    </location>
</feature>
<feature type="modified residue" description="N-acetylalanine" evidence="2">
    <location>
        <position position="2"/>
    </location>
</feature>
<feature type="modified residue" description="Phosphoserine" evidence="3">
    <location>
        <position position="9"/>
    </location>
</feature>
<feature type="modified residue" description="Phosphoserine" evidence="3">
    <location>
        <position position="37"/>
    </location>
</feature>
<feature type="modified residue" description="Phosphoserine" evidence="3">
    <location>
        <position position="85"/>
    </location>
</feature>
<feature type="modified residue" description="Phosphoserine" evidence="3">
    <location>
        <position position="87"/>
    </location>
</feature>
<accession>Q5XIS1</accession>